<evidence type="ECO:0000250" key="1">
    <source>
        <dbReference type="UniProtKB" id="Q9Y4X5"/>
    </source>
</evidence>
<evidence type="ECO:0000250" key="2">
    <source>
        <dbReference type="UniProtKB" id="Q9Z1K5"/>
    </source>
</evidence>
<evidence type="ECO:0000255" key="3">
    <source>
        <dbReference type="PROSITE-ProRule" id="PRU01221"/>
    </source>
</evidence>
<evidence type="ECO:0000256" key="4">
    <source>
        <dbReference type="SAM" id="MobiDB-lite"/>
    </source>
</evidence>
<evidence type="ECO:0000305" key="5"/>
<organism>
    <name type="scientific">Bos taurus</name>
    <name type="common">Bovine</name>
    <dbReference type="NCBI Taxonomy" id="9913"/>
    <lineage>
        <taxon>Eukaryota</taxon>
        <taxon>Metazoa</taxon>
        <taxon>Chordata</taxon>
        <taxon>Craniata</taxon>
        <taxon>Vertebrata</taxon>
        <taxon>Euteleostomi</taxon>
        <taxon>Mammalia</taxon>
        <taxon>Eutheria</taxon>
        <taxon>Laurasiatheria</taxon>
        <taxon>Artiodactyla</taxon>
        <taxon>Ruminantia</taxon>
        <taxon>Pecora</taxon>
        <taxon>Bovidae</taxon>
        <taxon>Bovinae</taxon>
        <taxon>Bos</taxon>
    </lineage>
</organism>
<accession>A2VEA3</accession>
<feature type="chain" id="PRO_0000330477" description="E3 ubiquitin-protein ligase ARIH1">
    <location>
        <begin position="1"/>
        <end position="555"/>
    </location>
</feature>
<feature type="zinc finger region" description="RING-type 1" evidence="3">
    <location>
        <begin position="184"/>
        <end position="234"/>
    </location>
</feature>
<feature type="zinc finger region" description="IBR-type" evidence="3">
    <location>
        <begin position="254"/>
        <end position="315"/>
    </location>
</feature>
<feature type="zinc finger region" description="RING-type 2; atypical" evidence="3">
    <location>
        <begin position="342"/>
        <end position="373"/>
    </location>
</feature>
<feature type="region of interest" description="Disordered" evidence="4">
    <location>
        <begin position="1"/>
        <end position="93"/>
    </location>
</feature>
<feature type="region of interest" description="UBA-like" evidence="1">
    <location>
        <begin position="103"/>
        <end position="151"/>
    </location>
</feature>
<feature type="region of interest" description="TRIAD supradomain" evidence="3">
    <location>
        <begin position="180"/>
        <end position="391"/>
    </location>
</feature>
<feature type="region of interest" description="Ariadne domain" evidence="1">
    <location>
        <begin position="406"/>
        <end position="555"/>
    </location>
</feature>
<feature type="compositionally biased region" description="Acidic residues" evidence="4">
    <location>
        <begin position="1"/>
        <end position="47"/>
    </location>
</feature>
<feature type="compositionally biased region" description="Gly residues" evidence="4">
    <location>
        <begin position="65"/>
        <end position="90"/>
    </location>
</feature>
<feature type="active site" evidence="3">
    <location>
        <position position="355"/>
    </location>
</feature>
<feature type="binding site" evidence="3">
    <location>
        <position position="184"/>
    </location>
    <ligand>
        <name>Zn(2+)</name>
        <dbReference type="ChEBI" id="CHEBI:29105"/>
        <label>1</label>
    </ligand>
</feature>
<feature type="binding site" evidence="3">
    <location>
        <position position="187"/>
    </location>
    <ligand>
        <name>Zn(2+)</name>
        <dbReference type="ChEBI" id="CHEBI:29105"/>
        <label>1</label>
    </ligand>
</feature>
<feature type="binding site" evidence="3">
    <location>
        <position position="201"/>
    </location>
    <ligand>
        <name>Zn(2+)</name>
        <dbReference type="ChEBI" id="CHEBI:29105"/>
        <label>2</label>
    </ligand>
</feature>
<feature type="binding site" evidence="3">
    <location>
        <position position="203"/>
    </location>
    <ligand>
        <name>Zn(2+)</name>
        <dbReference type="ChEBI" id="CHEBI:29105"/>
        <label>2</label>
    </ligand>
</feature>
<feature type="binding site" evidence="3">
    <location>
        <position position="206"/>
    </location>
    <ligand>
        <name>Zn(2+)</name>
        <dbReference type="ChEBI" id="CHEBI:29105"/>
        <label>1</label>
    </ligand>
</feature>
<feature type="binding site" evidence="3">
    <location>
        <position position="209"/>
    </location>
    <ligand>
        <name>Zn(2+)</name>
        <dbReference type="ChEBI" id="CHEBI:29105"/>
        <label>1</label>
    </ligand>
</feature>
<feature type="binding site" evidence="3">
    <location>
        <position position="229"/>
    </location>
    <ligand>
        <name>Zn(2+)</name>
        <dbReference type="ChEBI" id="CHEBI:29105"/>
        <label>2</label>
    </ligand>
</feature>
<feature type="binding site" evidence="3">
    <location>
        <position position="234"/>
    </location>
    <ligand>
        <name>Zn(2+)</name>
        <dbReference type="ChEBI" id="CHEBI:29105"/>
        <label>2</label>
    </ligand>
</feature>
<feature type="binding site" evidence="3">
    <location>
        <position position="274"/>
    </location>
    <ligand>
        <name>Zn(2+)</name>
        <dbReference type="ChEBI" id="CHEBI:29105"/>
        <label>3</label>
    </ligand>
</feature>
<feature type="binding site" evidence="3">
    <location>
        <position position="279"/>
    </location>
    <ligand>
        <name>Zn(2+)</name>
        <dbReference type="ChEBI" id="CHEBI:29105"/>
        <label>3</label>
    </ligand>
</feature>
<feature type="binding site" evidence="3">
    <location>
        <position position="295"/>
    </location>
    <ligand>
        <name>Zn(2+)</name>
        <dbReference type="ChEBI" id="CHEBI:29105"/>
        <label>3</label>
    </ligand>
</feature>
<feature type="binding site" evidence="3">
    <location>
        <position position="297"/>
    </location>
    <ligand>
        <name>Zn(2+)</name>
        <dbReference type="ChEBI" id="CHEBI:29105"/>
        <label>3</label>
    </ligand>
</feature>
<feature type="binding site" evidence="3">
    <location>
        <position position="302"/>
    </location>
    <ligand>
        <name>Zn(2+)</name>
        <dbReference type="ChEBI" id="CHEBI:29105"/>
        <label>4</label>
    </ligand>
</feature>
<feature type="binding site" evidence="3">
    <location>
        <position position="305"/>
    </location>
    <ligand>
        <name>Zn(2+)</name>
        <dbReference type="ChEBI" id="CHEBI:29105"/>
        <label>4</label>
    </ligand>
</feature>
<feature type="binding site" evidence="3">
    <location>
        <position position="310"/>
    </location>
    <ligand>
        <name>Zn(2+)</name>
        <dbReference type="ChEBI" id="CHEBI:29105"/>
        <label>4</label>
    </ligand>
</feature>
<feature type="binding site" evidence="3">
    <location>
        <position position="315"/>
    </location>
    <ligand>
        <name>Zn(2+)</name>
        <dbReference type="ChEBI" id="CHEBI:29105"/>
        <label>4</label>
    </ligand>
</feature>
<feature type="binding site" evidence="3">
    <location>
        <position position="342"/>
    </location>
    <ligand>
        <name>Zn(2+)</name>
        <dbReference type="ChEBI" id="CHEBI:29105"/>
        <label>5</label>
    </ligand>
</feature>
<feature type="binding site" evidence="3">
    <location>
        <position position="345"/>
    </location>
    <ligand>
        <name>Zn(2+)</name>
        <dbReference type="ChEBI" id="CHEBI:29105"/>
        <label>5</label>
    </ligand>
</feature>
<feature type="binding site" evidence="3">
    <location>
        <position position="360"/>
    </location>
    <ligand>
        <name>Zn(2+)</name>
        <dbReference type="ChEBI" id="CHEBI:29105"/>
        <label>5</label>
    </ligand>
</feature>
<feature type="binding site" evidence="3">
    <location>
        <position position="365"/>
    </location>
    <ligand>
        <name>Zn(2+)</name>
        <dbReference type="ChEBI" id="CHEBI:29105"/>
        <label>5</label>
    </ligand>
</feature>
<feature type="binding site" evidence="3">
    <location>
        <position position="370"/>
    </location>
    <ligand>
        <name>Zn(2+)</name>
        <dbReference type="ChEBI" id="CHEBI:29105"/>
        <label>6</label>
    </ligand>
</feature>
<feature type="binding site" evidence="3">
    <location>
        <position position="373"/>
    </location>
    <ligand>
        <name>Zn(2+)</name>
        <dbReference type="ChEBI" id="CHEBI:29105"/>
        <label>6</label>
    </ligand>
</feature>
<feature type="binding site" evidence="3">
    <location>
        <position position="380"/>
    </location>
    <ligand>
        <name>Zn(2+)</name>
        <dbReference type="ChEBI" id="CHEBI:29105"/>
        <label>6</label>
    </ligand>
</feature>
<feature type="binding site" evidence="3">
    <location>
        <position position="387"/>
    </location>
    <ligand>
        <name>Zn(2+)</name>
        <dbReference type="ChEBI" id="CHEBI:29105"/>
        <label>6</label>
    </ligand>
</feature>
<feature type="modified residue" description="N6-acetyllysine" evidence="2">
    <location>
        <position position="140"/>
    </location>
</feature>
<dbReference type="EC" id="2.3.2.31" evidence="1"/>
<dbReference type="EMBL" id="BC133645">
    <property type="protein sequence ID" value="AAI33646.1"/>
    <property type="molecule type" value="mRNA"/>
</dbReference>
<dbReference type="RefSeq" id="NP_001075183.1">
    <property type="nucleotide sequence ID" value="NM_001081714.2"/>
</dbReference>
<dbReference type="BMRB" id="A2VEA3"/>
<dbReference type="SMR" id="A2VEA3"/>
<dbReference type="FunCoup" id="A2VEA3">
    <property type="interactions" value="4946"/>
</dbReference>
<dbReference type="STRING" id="9913.ENSBTAP00000008822"/>
<dbReference type="PaxDb" id="9913-ENSBTAP00000008822"/>
<dbReference type="Ensembl" id="ENSBTAT00000008822.6">
    <property type="protein sequence ID" value="ENSBTAP00000008822.5"/>
    <property type="gene ID" value="ENSBTAG00000006708.7"/>
</dbReference>
<dbReference type="GeneID" id="508410"/>
<dbReference type="KEGG" id="bta:508410"/>
<dbReference type="CTD" id="25820"/>
<dbReference type="VEuPathDB" id="HostDB:ENSBTAG00000006708"/>
<dbReference type="VGNC" id="VGNC:26133">
    <property type="gene designation" value="ARIH1"/>
</dbReference>
<dbReference type="eggNOG" id="KOG1815">
    <property type="taxonomic scope" value="Eukaryota"/>
</dbReference>
<dbReference type="GeneTree" id="ENSGT00940000155744"/>
<dbReference type="HOGENOM" id="CLU_009823_4_2_1"/>
<dbReference type="InParanoid" id="A2VEA3"/>
<dbReference type="OMA" id="HRFCMIC"/>
<dbReference type="OrthoDB" id="10009520at2759"/>
<dbReference type="TreeFam" id="TF300805"/>
<dbReference type="Reactome" id="R-BTA-1169408">
    <property type="pathway name" value="ISG15 antiviral mechanism"/>
</dbReference>
<dbReference type="Reactome" id="R-BTA-9833482">
    <property type="pathway name" value="PKR-mediated signaling"/>
</dbReference>
<dbReference type="Reactome" id="R-BTA-9909505">
    <property type="pathway name" value="Modulation of host responses by IFN-stimulated genes"/>
</dbReference>
<dbReference type="UniPathway" id="UPA00143"/>
<dbReference type="Proteomes" id="UP000009136">
    <property type="component" value="Chromosome 10"/>
</dbReference>
<dbReference type="Bgee" id="ENSBTAG00000006708">
    <property type="expression patterns" value="Expressed in spermatid and 106 other cell types or tissues"/>
</dbReference>
<dbReference type="GO" id="GO:0015030">
    <property type="term" value="C:Cajal body"/>
    <property type="evidence" value="ECO:0007669"/>
    <property type="project" value="UniProtKB-SubCell"/>
</dbReference>
<dbReference type="GO" id="GO:0005737">
    <property type="term" value="C:cytoplasm"/>
    <property type="evidence" value="ECO:0000250"/>
    <property type="project" value="UniProtKB"/>
</dbReference>
<dbReference type="GO" id="GO:0097413">
    <property type="term" value="C:Lewy body"/>
    <property type="evidence" value="ECO:0000250"/>
    <property type="project" value="UniProtKB"/>
</dbReference>
<dbReference type="GO" id="GO:0016604">
    <property type="term" value="C:nuclear body"/>
    <property type="evidence" value="ECO:0000250"/>
    <property type="project" value="UniProtKB"/>
</dbReference>
<dbReference type="GO" id="GO:0005634">
    <property type="term" value="C:nucleus"/>
    <property type="evidence" value="ECO:0000318"/>
    <property type="project" value="GO_Central"/>
</dbReference>
<dbReference type="GO" id="GO:0000151">
    <property type="term" value="C:ubiquitin ligase complex"/>
    <property type="evidence" value="ECO:0000318"/>
    <property type="project" value="GO_Central"/>
</dbReference>
<dbReference type="GO" id="GO:0031624">
    <property type="term" value="F:ubiquitin conjugating enzyme binding"/>
    <property type="evidence" value="ECO:0000318"/>
    <property type="project" value="GO_Central"/>
</dbReference>
<dbReference type="GO" id="GO:0061630">
    <property type="term" value="F:ubiquitin protein ligase activity"/>
    <property type="evidence" value="ECO:0000318"/>
    <property type="project" value="GO_Central"/>
</dbReference>
<dbReference type="GO" id="GO:0004842">
    <property type="term" value="F:ubiquitin-protein transferase activity"/>
    <property type="evidence" value="ECO:0000250"/>
    <property type="project" value="UniProtKB"/>
</dbReference>
<dbReference type="GO" id="GO:0008270">
    <property type="term" value="F:zinc ion binding"/>
    <property type="evidence" value="ECO:0000250"/>
    <property type="project" value="UniProtKB"/>
</dbReference>
<dbReference type="GO" id="GO:0016567">
    <property type="term" value="P:protein ubiquitination"/>
    <property type="evidence" value="ECO:0000250"/>
    <property type="project" value="UniProtKB"/>
</dbReference>
<dbReference type="GO" id="GO:0006511">
    <property type="term" value="P:ubiquitin-dependent protein catabolic process"/>
    <property type="evidence" value="ECO:0000318"/>
    <property type="project" value="GO_Central"/>
</dbReference>
<dbReference type="CDD" id="cd20343">
    <property type="entry name" value="BRcat_RBR_HHARI-like"/>
    <property type="match status" value="1"/>
</dbReference>
<dbReference type="CDD" id="cd20356">
    <property type="entry name" value="Rcat_RBR_HHARI-like"/>
    <property type="match status" value="1"/>
</dbReference>
<dbReference type="CDD" id="cd16626">
    <property type="entry name" value="RING-HC_RBR_HHARI"/>
    <property type="match status" value="1"/>
</dbReference>
<dbReference type="FunFam" id="1.20.120.1750:FF:000002">
    <property type="entry name" value="RBR-type E3 ubiquitin transferase"/>
    <property type="match status" value="1"/>
</dbReference>
<dbReference type="FunFam" id="3.30.40.10:FF:000019">
    <property type="entry name" value="RBR-type E3 ubiquitin transferase"/>
    <property type="match status" value="1"/>
</dbReference>
<dbReference type="Gene3D" id="1.20.120.1750">
    <property type="match status" value="1"/>
</dbReference>
<dbReference type="Gene3D" id="3.30.40.10">
    <property type="entry name" value="Zinc/RING finger domain, C3HC4 (zinc finger)"/>
    <property type="match status" value="1"/>
</dbReference>
<dbReference type="InterPro" id="IPR045840">
    <property type="entry name" value="Ariadne"/>
</dbReference>
<dbReference type="InterPro" id="IPR048962">
    <property type="entry name" value="ARIH1-like_UBL"/>
</dbReference>
<dbReference type="InterPro" id="IPR031127">
    <property type="entry name" value="E3_UB_ligase_RBR"/>
</dbReference>
<dbReference type="InterPro" id="IPR002867">
    <property type="entry name" value="IBR_dom"/>
</dbReference>
<dbReference type="InterPro" id="IPR044066">
    <property type="entry name" value="TRIAD_supradom"/>
</dbReference>
<dbReference type="InterPro" id="IPR018957">
    <property type="entry name" value="Znf_C3HC4_RING-type"/>
</dbReference>
<dbReference type="InterPro" id="IPR001841">
    <property type="entry name" value="Znf_RING"/>
</dbReference>
<dbReference type="InterPro" id="IPR013083">
    <property type="entry name" value="Znf_RING/FYVE/PHD"/>
</dbReference>
<dbReference type="PANTHER" id="PTHR11685">
    <property type="entry name" value="RBR FAMILY RING FINGER AND IBR DOMAIN-CONTAINING"/>
    <property type="match status" value="1"/>
</dbReference>
<dbReference type="Pfam" id="PF19422">
    <property type="entry name" value="Ariadne"/>
    <property type="match status" value="1"/>
</dbReference>
<dbReference type="Pfam" id="PF01485">
    <property type="entry name" value="IBR"/>
    <property type="match status" value="1"/>
</dbReference>
<dbReference type="Pfam" id="PF22191">
    <property type="entry name" value="IBR_1"/>
    <property type="match status" value="1"/>
</dbReference>
<dbReference type="Pfam" id="PF21235">
    <property type="entry name" value="UBA_ARI1"/>
    <property type="match status" value="1"/>
</dbReference>
<dbReference type="Pfam" id="PF00097">
    <property type="entry name" value="zf-C3HC4"/>
    <property type="match status" value="1"/>
</dbReference>
<dbReference type="SMART" id="SM00647">
    <property type="entry name" value="IBR"/>
    <property type="match status" value="2"/>
</dbReference>
<dbReference type="SMART" id="SM00184">
    <property type="entry name" value="RING"/>
    <property type="match status" value="2"/>
</dbReference>
<dbReference type="SUPFAM" id="SSF57850">
    <property type="entry name" value="RING/U-box"/>
    <property type="match status" value="3"/>
</dbReference>
<dbReference type="PROSITE" id="PS51873">
    <property type="entry name" value="TRIAD"/>
    <property type="match status" value="1"/>
</dbReference>
<dbReference type="PROSITE" id="PS50089">
    <property type="entry name" value="ZF_RING_2"/>
    <property type="match status" value="1"/>
</dbReference>
<protein>
    <recommendedName>
        <fullName>E3 ubiquitin-protein ligase ARIH1</fullName>
        <ecNumber evidence="1">2.3.2.31</ecNumber>
    </recommendedName>
    <alternativeName>
        <fullName>Protein ariadne-1 homolog</fullName>
        <shortName>ARI-1</shortName>
    </alternativeName>
</protein>
<reference key="1">
    <citation type="submission" date="2007-02" db="EMBL/GenBank/DDBJ databases">
        <authorList>
            <consortium name="NIH - Mammalian Gene Collection (MGC) project"/>
        </authorList>
    </citation>
    <scope>NUCLEOTIDE SEQUENCE [LARGE SCALE MRNA]</scope>
    <source>
        <strain>Hereford</strain>
        <tissue>Fetal cerebellum</tissue>
    </source>
</reference>
<gene>
    <name type="primary">ARIH1</name>
</gene>
<comment type="function">
    <text evidence="1">E3 ubiquitin-protein ligase, which catalyzes ubiquitination of target proteins together with ubiquitin-conjugating enzyme E2 UBE2L3. Acts as an atypical E3 ubiquitin-protein ligase by working together with cullin-RING ubiquitin ligase (CRL) complexes and initiating ubiquitination of CRL substrates: associates with CRL complexes and specifically mediates addition of the first ubiquitin on CRLs targets. The initial ubiquitin is then elongated by CDC34/UBE2R1 and UBE2R2. E3 ubiquitin-protein ligase activity is activated upon binding to neddylated cullin-RING ubiquitin ligase complexes. Plays a role in protein translation in response to DNA damage by mediating ubiquitination of EIF4E2, the consequences of EIF4E2 ubiquitination are however unclear. According to a report, EIF4E2 ubiquitination leads to promote EIF4E2 cap-binding and protein translation arrest. According to another report EIF4E2 ubiquitination leads to its subsequent degradation. Acts as the ligase involved in ISGylation of EIF4E2. In vitro, controls the degradation of the LINC (LInker of Nucleoskeleton and Cytoskeleton) complex member SUN2 and may therefore have a role in the formation and localization of the LINC complex, and as a consequence, may act in nuclear subcellular localization and nuclear morphology.</text>
</comment>
<comment type="catalytic activity">
    <reaction evidence="1">
        <text>[E2 ubiquitin-conjugating enzyme]-S-ubiquitinyl-L-cysteine + [acceptor protein]-L-lysine = [E2 ubiquitin-conjugating enzyme]-L-cysteine + [acceptor protein]-N(6)-ubiquitinyl-L-lysine.</text>
        <dbReference type="EC" id="2.3.2.31"/>
    </reaction>
</comment>
<comment type="activity regulation">
    <text evidence="1">Autoinhibited by the ariadne domain, which masks the second RING-type zinc finger that contains the active site and inhibits the E3 activity. Inhibition is relieved upon binding to neddylated cullin-RING ubiquitin ligase complexes, which activate the E3 ligase activity of ARIH1.</text>
</comment>
<comment type="pathway">
    <text>Protein modification; protein ubiquitination.</text>
</comment>
<comment type="subunit">
    <text evidence="1">Interacts (via the first RING-type zinc finger) with UBE2L3. Associates with cullin-RING ubiquitin ligase (CRL) complexes containing CUL1, CUL2 and CUL3. Interacts with neddylated CUL1. Interacts with neddylated CUL2. Interacts with neddylated CUL3. Interacts with neddylated CUL4A.</text>
</comment>
<comment type="subcellular location">
    <subcellularLocation>
        <location evidence="1">Cytoplasm</location>
    </subcellularLocation>
    <subcellularLocation>
        <location evidence="1">Nucleus</location>
    </subcellularLocation>
    <subcellularLocation>
        <location evidence="1">Nucleus</location>
        <location evidence="1">Cajal body</location>
    </subcellularLocation>
    <text evidence="1">Mainly cytoplasmic. Present in Lewy body.</text>
</comment>
<comment type="domain">
    <text evidence="1">Members of the RBR family are atypical E3 ligases. They interact with the E2 conjugating enzyme UBE2L3 and function like HECT-type E3 enzymes: they bind E2s via the first RING-type zinc finger, but require an obligate trans-thiolation step during the ubiquitin transfer, requiring a conserved active site Cys residue in the second RING-type zinc finger. The active site probably forms a thioester intermediate with ubiquitin taken from the active-site cysteine of the E2 before ultimately transferring it to a Lys residue on the substrate.</text>
</comment>
<comment type="domain">
    <text evidence="1">The Ariadne domain inhibits activity by masking the second RING-type zinc finger that contains the active site.</text>
</comment>
<comment type="similarity">
    <text evidence="5">Belongs to the RBR family. Ariadne subfamily.</text>
</comment>
<sequence>MDSDEGYNYEFDEDEECSEEDSGAEEEEDEDDDEPDDDNLDLGEVELVEPGLGVGGERDGLLCGETGGGGGSALGPGGGGGGGGGGGGPGHEQEEDYRYEVLTAEQILQHMVECIREVNEVIQNPATITRILLSHFNWDKEKLMERYFDGNLEKLFAECHVINPSKKSRTRQMNTRSSAQDMPCQICYLNYPNSYFTGLECGHKFCMQCWSEYLTTKIMEEGMGQTISCPAHGCDILVDDNTVMRLITDSKVKLKYQHLITNSFVECNRLLKWCPAPDCHHVVKVQYPDAKPVRCKCGRQFCFNCGENWHDPVKCKWLKKWIKKCDDDSETSNWIAANTKECPKCHVTIEKDGGCNHMVCRNQNCKAEFCWVCLGPWEPHGSAWYNCNRYNEDDAKAARDAQERSRAALQRYLFYCNRYMNHMQSLRFEHKLYAQVKQKMEEMQQHNMSWIEVQFLKKAVDVLCQCRATLMYTYVFAFYLKKNNQSIIFENNQADLENATEVLSGYLERDISQDSLQDIKQKVQDKYRYCESRRRVLLQHVHEGYEKDLWEYIED</sequence>
<name>ARI1_BOVIN</name>
<proteinExistence type="evidence at transcript level"/>
<keyword id="KW-0007">Acetylation</keyword>
<keyword id="KW-0963">Cytoplasm</keyword>
<keyword id="KW-0479">Metal-binding</keyword>
<keyword id="KW-0539">Nucleus</keyword>
<keyword id="KW-1185">Reference proteome</keyword>
<keyword id="KW-0677">Repeat</keyword>
<keyword id="KW-0808">Transferase</keyword>
<keyword id="KW-0833">Ubl conjugation pathway</keyword>
<keyword id="KW-0862">Zinc</keyword>
<keyword id="KW-0863">Zinc-finger</keyword>